<feature type="chain" id="PRO_0000211972" description="Creatine kinase B-type">
    <location>
        <begin position="1" status="less than"/>
        <end position="52" status="greater than"/>
    </location>
</feature>
<feature type="domain" description="Phosphagen kinase C-terminal" evidence="4">
    <location>
        <begin position="1"/>
        <end position="52"/>
    </location>
</feature>
<feature type="domain" description="Phosphagen kinase N-terminal" evidence="3">
    <location>
        <begin position="1"/>
        <end position="52"/>
    </location>
</feature>
<feature type="binding site" evidence="4">
    <location>
        <position position="13"/>
    </location>
    <ligand>
        <name>ATP</name>
        <dbReference type="ChEBI" id="CHEBI:30616"/>
    </ligand>
</feature>
<feature type="binding site" evidence="4">
    <location>
        <position position="47"/>
    </location>
    <ligand>
        <name>ATP</name>
        <dbReference type="ChEBI" id="CHEBI:30616"/>
    </ligand>
</feature>
<feature type="sequence variant">
    <original>V</original>
    <variation>I</variation>
    <location>
        <position position="3"/>
    </location>
</feature>
<feature type="sequence variant">
    <original>T</original>
    <variation>S</variation>
    <location>
        <position position="5"/>
    </location>
</feature>
<feature type="sequence variant">
    <original>K</original>
    <variation>S</variation>
    <location>
        <position position="10"/>
    </location>
</feature>
<feature type="sequence variant">
    <original>R</original>
    <variation>K</variation>
    <location>
        <position position="13"/>
    </location>
</feature>
<feature type="sequence variant">
    <original>S</original>
    <variation>Q</variation>
    <location>
        <position position="16"/>
    </location>
</feature>
<feature type="unsure residue">
    <location>
        <position position="38"/>
    </location>
</feature>
<feature type="non-consecutive residues" evidence="7">
    <location>
        <begin position="28"/>
        <end position="29"/>
    </location>
</feature>
<feature type="non-terminal residue" evidence="6">
    <location>
        <position position="1"/>
    </location>
</feature>
<feature type="non-terminal residue" evidence="6">
    <location>
        <position position="52"/>
    </location>
</feature>
<sequence length="52" mass="5778">AKVLTLDLYKKLRDKSTPSGFTLDDIIQNEHLGYVLTCPSNLGTXLRAXVHV</sequence>
<accession>P26460</accession>
<proteinExistence type="evidence at protein level"/>
<protein>
    <recommendedName>
        <fullName evidence="7">Creatine kinase B-type</fullName>
        <ecNumber evidence="1">2.7.3.2</ecNumber>
    </recommendedName>
    <alternativeName>
        <fullName evidence="7">B-CK</fullName>
    </alternativeName>
    <alternativeName>
        <fullName evidence="7">Creatine kinase B chain</fullName>
    </alternativeName>
</protein>
<name>KCRB_SQUAC</name>
<organism>
    <name type="scientific">Squalus acanthias</name>
    <name type="common">Spiny dogfish</name>
    <dbReference type="NCBI Taxonomy" id="7797"/>
    <lineage>
        <taxon>Eukaryota</taxon>
        <taxon>Metazoa</taxon>
        <taxon>Chordata</taxon>
        <taxon>Craniata</taxon>
        <taxon>Vertebrata</taxon>
        <taxon>Chondrichthyes</taxon>
        <taxon>Elasmobranchii</taxon>
        <taxon>Squalomorphii</taxon>
        <taxon>Squaliformes</taxon>
        <taxon>Squalidae</taxon>
        <taxon>Squalus</taxon>
    </lineage>
</organism>
<comment type="function">
    <text evidence="1">Reversibly catalyzes the transfer of phosphate between ATP and various phosphogens (e.g. creatine phosphate). Creatine kinase isoenzymes play a central role in energy transduction in tissues with large, fluctuating energy demands, such as skeletal muscle, heart, brain and spermatozoa.</text>
</comment>
<comment type="catalytic activity">
    <reaction evidence="1 5">
        <text>creatine + ATP = N-phosphocreatine + ADP + H(+)</text>
        <dbReference type="Rhea" id="RHEA:17157"/>
        <dbReference type="ChEBI" id="CHEBI:15378"/>
        <dbReference type="ChEBI" id="CHEBI:30616"/>
        <dbReference type="ChEBI" id="CHEBI:57947"/>
        <dbReference type="ChEBI" id="CHEBI:58092"/>
        <dbReference type="ChEBI" id="CHEBI:456216"/>
        <dbReference type="EC" id="2.7.3.2"/>
    </reaction>
</comment>
<comment type="subunit">
    <text evidence="1">Dimer of identical or non-identical chains, which can be either B (brain type) or M (muscle type). With MM being the major form in skeletal muscle and myocardium, MB existing in myocardium, and BB existing in many tissues, especially brain.</text>
</comment>
<comment type="subcellular location">
    <subcellularLocation>
        <location evidence="2">Cytoplasm</location>
        <location evidence="2">Cytosol</location>
    </subcellularLocation>
    <subcellularLocation>
        <location evidence="2">Mitochondrion</location>
    </subcellularLocation>
    <subcellularLocation>
        <location evidence="6">Basal cell membrane</location>
    </subcellularLocation>
    <text evidence="6">Basal membrane of the sodium chloride-secreting epithelia.</text>
</comment>
<comment type="tissue specificity">
    <text evidence="6">Expressed in rectal gland, brain, skeletal muscle (at protein level).</text>
</comment>
<comment type="similarity">
    <text evidence="3 4">Belongs to the ATP:guanido phosphotransferase family.</text>
</comment>
<keyword id="KW-0067">ATP-binding</keyword>
<keyword id="KW-1003">Cell membrane</keyword>
<keyword id="KW-0963">Cytoplasm</keyword>
<keyword id="KW-0903">Direct protein sequencing</keyword>
<keyword id="KW-0418">Kinase</keyword>
<keyword id="KW-0472">Membrane</keyword>
<keyword id="KW-0496">Mitochondrion</keyword>
<keyword id="KW-0547">Nucleotide-binding</keyword>
<keyword id="KW-0808">Transferase</keyword>
<reference key="1">
    <citation type="journal article" date="1992" name="J. Biol. Chem.">
        <title>Purification and localization of brain-type creatine kinase in sodium chloride transporting epithelia of the spiny dogfish, Squalus acanthias.</title>
        <authorList>
            <person name="Friedman D.L."/>
            <person name="Roberts R."/>
        </authorList>
    </citation>
    <scope>PROTEIN SEQUENCE</scope>
    <scope>SUBCELLULAR LOCATION</scope>
    <scope>TISSUE SPECIFICITY</scope>
    <source>
        <tissue>Rectal gland</tissue>
    </source>
</reference>
<dbReference type="EC" id="2.7.3.2" evidence="1"/>
<dbReference type="PIR" id="A42272">
    <property type="entry name" value="A42272"/>
</dbReference>
<dbReference type="PIR" id="B42272">
    <property type="entry name" value="B42272"/>
</dbReference>
<dbReference type="GO" id="GO:0009925">
    <property type="term" value="C:basal plasma membrane"/>
    <property type="evidence" value="ECO:0007669"/>
    <property type="project" value="UniProtKB-SubCell"/>
</dbReference>
<dbReference type="GO" id="GO:0005829">
    <property type="term" value="C:cytosol"/>
    <property type="evidence" value="ECO:0007669"/>
    <property type="project" value="UniProtKB-SubCell"/>
</dbReference>
<dbReference type="GO" id="GO:0005615">
    <property type="term" value="C:extracellular space"/>
    <property type="evidence" value="ECO:0007669"/>
    <property type="project" value="TreeGrafter"/>
</dbReference>
<dbReference type="GO" id="GO:0005739">
    <property type="term" value="C:mitochondrion"/>
    <property type="evidence" value="ECO:0007669"/>
    <property type="project" value="UniProtKB-SubCell"/>
</dbReference>
<dbReference type="GO" id="GO:0005524">
    <property type="term" value="F:ATP binding"/>
    <property type="evidence" value="ECO:0007669"/>
    <property type="project" value="UniProtKB-KW"/>
</dbReference>
<dbReference type="GO" id="GO:0004111">
    <property type="term" value="F:creatine kinase activity"/>
    <property type="evidence" value="ECO:0007669"/>
    <property type="project" value="UniProtKB-EC"/>
</dbReference>
<dbReference type="GO" id="GO:0046314">
    <property type="term" value="P:phosphocreatine biosynthetic process"/>
    <property type="evidence" value="ECO:0007669"/>
    <property type="project" value="InterPro"/>
</dbReference>
<dbReference type="Gene3D" id="1.10.135.10">
    <property type="entry name" value="ATP:guanido phosphotransferase, N-terminal domain"/>
    <property type="match status" value="1"/>
</dbReference>
<dbReference type="InterPro" id="IPR000749">
    <property type="entry name" value="ATP-guanido_PTrfase"/>
</dbReference>
<dbReference type="InterPro" id="IPR022415">
    <property type="entry name" value="ATP-guanido_PTrfase_AS"/>
</dbReference>
<dbReference type="InterPro" id="IPR022414">
    <property type="entry name" value="ATP-guanido_PTrfase_cat"/>
</dbReference>
<dbReference type="InterPro" id="IPR022413">
    <property type="entry name" value="ATP-guanido_PTrfase_N"/>
</dbReference>
<dbReference type="InterPro" id="IPR036802">
    <property type="entry name" value="ATP-guanido_PTrfase_N_sf"/>
</dbReference>
<dbReference type="InterPro" id="IPR014746">
    <property type="entry name" value="Gln_synth/guanido_kin_cat_dom"/>
</dbReference>
<dbReference type="PANTHER" id="PTHR11547">
    <property type="entry name" value="ARGININE OR CREATINE KINASE"/>
    <property type="match status" value="1"/>
</dbReference>
<dbReference type="PANTHER" id="PTHR11547:SF23">
    <property type="entry name" value="CREATINE KINASE B-TYPE"/>
    <property type="match status" value="1"/>
</dbReference>
<dbReference type="Pfam" id="PF00217">
    <property type="entry name" value="ATP-gua_Ptrans"/>
    <property type="match status" value="1"/>
</dbReference>
<dbReference type="Pfam" id="PF02807">
    <property type="entry name" value="ATP-gua_PtransN"/>
    <property type="match status" value="1"/>
</dbReference>
<dbReference type="SUPFAM" id="SSF55931">
    <property type="entry name" value="Glutamine synthetase/guanido kinase"/>
    <property type="match status" value="1"/>
</dbReference>
<dbReference type="SUPFAM" id="SSF48034">
    <property type="entry name" value="Guanido kinase N-terminal domain"/>
    <property type="match status" value="1"/>
</dbReference>
<dbReference type="PROSITE" id="PS00112">
    <property type="entry name" value="PHOSPHAGEN_KINASE"/>
    <property type="match status" value="1"/>
</dbReference>
<dbReference type="PROSITE" id="PS51510">
    <property type="entry name" value="PHOSPHAGEN_KINASE_C"/>
    <property type="match status" value="1"/>
</dbReference>
<dbReference type="PROSITE" id="PS51509">
    <property type="entry name" value="PHOSPHAGEN_KINASE_N"/>
    <property type="match status" value="1"/>
</dbReference>
<evidence type="ECO:0000250" key="1">
    <source>
        <dbReference type="UniProtKB" id="P12277"/>
    </source>
</evidence>
<evidence type="ECO:0000250" key="2">
    <source>
        <dbReference type="UniProtKB" id="Q04447"/>
    </source>
</evidence>
<evidence type="ECO:0000255" key="3">
    <source>
        <dbReference type="PROSITE-ProRule" id="PRU00842"/>
    </source>
</evidence>
<evidence type="ECO:0000255" key="4">
    <source>
        <dbReference type="PROSITE-ProRule" id="PRU00843"/>
    </source>
</evidence>
<evidence type="ECO:0000255" key="5">
    <source>
        <dbReference type="PROSITE-ProRule" id="PRU10029"/>
    </source>
</evidence>
<evidence type="ECO:0000269" key="6">
    <source>
    </source>
</evidence>
<evidence type="ECO:0000305" key="7"/>